<accession>Q35117</accession>
<keyword id="KW-0249">Electron transport</keyword>
<keyword id="KW-0349">Heme</keyword>
<keyword id="KW-0408">Iron</keyword>
<keyword id="KW-0472">Membrane</keyword>
<keyword id="KW-0479">Metal-binding</keyword>
<keyword id="KW-0496">Mitochondrion</keyword>
<keyword id="KW-0999">Mitochondrion inner membrane</keyword>
<keyword id="KW-0679">Respiratory chain</keyword>
<keyword id="KW-0812">Transmembrane</keyword>
<keyword id="KW-1133">Transmembrane helix</keyword>
<keyword id="KW-0813">Transport</keyword>
<keyword id="KW-0830">Ubiquinone</keyword>
<dbReference type="EMBL" id="L19728">
    <property type="protein sequence ID" value="AAA17774.1"/>
    <property type="molecule type" value="Genomic_DNA"/>
</dbReference>
<dbReference type="SMR" id="Q35117"/>
<dbReference type="GO" id="GO:0005743">
    <property type="term" value="C:mitochondrial inner membrane"/>
    <property type="evidence" value="ECO:0007669"/>
    <property type="project" value="UniProtKB-SubCell"/>
</dbReference>
<dbReference type="GO" id="GO:0046872">
    <property type="term" value="F:metal ion binding"/>
    <property type="evidence" value="ECO:0007669"/>
    <property type="project" value="UniProtKB-KW"/>
</dbReference>
<dbReference type="GO" id="GO:0008121">
    <property type="term" value="F:ubiquinol-cytochrome-c reductase activity"/>
    <property type="evidence" value="ECO:0007669"/>
    <property type="project" value="TreeGrafter"/>
</dbReference>
<dbReference type="GO" id="GO:0006122">
    <property type="term" value="P:mitochondrial electron transport, ubiquinol to cytochrome c"/>
    <property type="evidence" value="ECO:0007669"/>
    <property type="project" value="TreeGrafter"/>
</dbReference>
<dbReference type="CDD" id="cd00284">
    <property type="entry name" value="Cytochrome_b_N"/>
    <property type="match status" value="1"/>
</dbReference>
<dbReference type="Gene3D" id="1.20.810.10">
    <property type="entry name" value="Cytochrome Bc1 Complex, Chain C"/>
    <property type="match status" value="1"/>
</dbReference>
<dbReference type="InterPro" id="IPR005797">
    <property type="entry name" value="Cyt_b/b6_N"/>
</dbReference>
<dbReference type="InterPro" id="IPR027387">
    <property type="entry name" value="Cytb/b6-like_sf"/>
</dbReference>
<dbReference type="InterPro" id="IPR048259">
    <property type="entry name" value="Cytochrome_b_N_euk/bac"/>
</dbReference>
<dbReference type="InterPro" id="IPR016174">
    <property type="entry name" value="Di-haem_cyt_TM"/>
</dbReference>
<dbReference type="PANTHER" id="PTHR19271">
    <property type="entry name" value="CYTOCHROME B"/>
    <property type="match status" value="1"/>
</dbReference>
<dbReference type="PANTHER" id="PTHR19271:SF16">
    <property type="entry name" value="CYTOCHROME B"/>
    <property type="match status" value="1"/>
</dbReference>
<dbReference type="Pfam" id="PF00033">
    <property type="entry name" value="Cytochrome_B"/>
    <property type="match status" value="1"/>
</dbReference>
<dbReference type="SUPFAM" id="SSF81342">
    <property type="entry name" value="Transmembrane di-heme cytochromes"/>
    <property type="match status" value="1"/>
</dbReference>
<dbReference type="PROSITE" id="PS51002">
    <property type="entry name" value="CYTB_NTER"/>
    <property type="match status" value="1"/>
</dbReference>
<name>CYB_NYCAU</name>
<organism>
    <name type="scientific">Nyctinomops aurispinosus</name>
    <name type="common">Peale's free-tailed bat</name>
    <dbReference type="NCBI Taxonomy" id="27626"/>
    <lineage>
        <taxon>Eukaryota</taxon>
        <taxon>Metazoa</taxon>
        <taxon>Chordata</taxon>
        <taxon>Craniata</taxon>
        <taxon>Vertebrata</taxon>
        <taxon>Euteleostomi</taxon>
        <taxon>Mammalia</taxon>
        <taxon>Eutheria</taxon>
        <taxon>Laurasiatheria</taxon>
        <taxon>Chiroptera</taxon>
        <taxon>Yangochiroptera</taxon>
        <taxon>Molossidae</taxon>
        <taxon>Nyctinomops</taxon>
    </lineage>
</organism>
<comment type="function">
    <text evidence="2">Component of the ubiquinol-cytochrome c reductase complex (complex III or cytochrome b-c1 complex) that is part of the mitochondrial respiratory chain. The b-c1 complex mediates electron transfer from ubiquinol to cytochrome c. Contributes to the generation of a proton gradient across the mitochondrial membrane that is then used for ATP synthesis.</text>
</comment>
<comment type="cofactor">
    <cofactor evidence="2">
        <name>heme b</name>
        <dbReference type="ChEBI" id="CHEBI:60344"/>
    </cofactor>
    <text evidence="2">Binds 2 heme b groups non-covalently.</text>
</comment>
<comment type="subunit">
    <text evidence="2">The cytochrome bc1 complex contains 11 subunits: 3 respiratory subunits (MT-CYB, CYC1 and UQCRFS1), 2 core proteins (UQCRC1 and UQCRC2) and 6 low-molecular weight proteins (UQCRH/QCR6, UQCRB/QCR7, UQCRQ/QCR8, UQCR10/QCR9, UQCR11/QCR10 and a cleavage product of UQCRFS1). This cytochrome bc1 complex then forms a dimer.</text>
</comment>
<comment type="subcellular location">
    <subcellularLocation>
        <location evidence="2">Mitochondrion inner membrane</location>
        <topology evidence="2">Multi-pass membrane protein</topology>
    </subcellularLocation>
</comment>
<comment type="miscellaneous">
    <text evidence="1">Heme 1 (or BL or b562) is low-potential and absorbs at about 562 nm, and heme 2 (or BH or b566) is high-potential and absorbs at about 566 nm.</text>
</comment>
<comment type="similarity">
    <text evidence="3">Belongs to the cytochrome b family.</text>
</comment>
<comment type="caution">
    <text evidence="2">The full-length protein contains only eight transmembrane helices, not nine as predicted by bioinformatics tools.</text>
</comment>
<feature type="chain" id="PRO_0000061285" description="Cytochrome b">
    <location>
        <begin position="1"/>
        <end position="176" status="greater than"/>
    </location>
</feature>
<feature type="transmembrane region" description="Helical" evidence="2">
    <location>
        <begin position="33"/>
        <end position="53"/>
    </location>
</feature>
<feature type="transmembrane region" description="Helical" evidence="2">
    <location>
        <begin position="77"/>
        <end position="98"/>
    </location>
</feature>
<feature type="transmembrane region" description="Helical" evidence="2">
    <location>
        <begin position="113"/>
        <end position="133"/>
    </location>
</feature>
<feature type="binding site" description="axial binding residue" evidence="2">
    <location>
        <position position="83"/>
    </location>
    <ligand>
        <name>heme b</name>
        <dbReference type="ChEBI" id="CHEBI:60344"/>
        <label>b562</label>
    </ligand>
    <ligandPart>
        <name>Fe</name>
        <dbReference type="ChEBI" id="CHEBI:18248"/>
    </ligandPart>
</feature>
<feature type="binding site" description="axial binding residue" evidence="2">
    <location>
        <position position="97"/>
    </location>
    <ligand>
        <name>heme b</name>
        <dbReference type="ChEBI" id="CHEBI:60344"/>
        <label>b566</label>
    </ligand>
    <ligandPart>
        <name>Fe</name>
        <dbReference type="ChEBI" id="CHEBI:18248"/>
    </ligandPart>
</feature>
<feature type="non-terminal residue">
    <location>
        <position position="176"/>
    </location>
</feature>
<proteinExistence type="inferred from homology"/>
<reference key="1">
    <citation type="journal article" date="1994" name="J. Mammal.">
        <title>Familial affinity of Tomopeas ravus (Chiroptera) based on protein electrophoretic and cytochrome b sequence data.</title>
        <authorList>
            <person name="Sudman P.D."/>
            <person name="Barkley L.J."/>
            <person name="Hafner M.S."/>
        </authorList>
    </citation>
    <scope>NUCLEOTIDE SEQUENCE [GENOMIC DNA]</scope>
    <source>
        <strain>Isolate LSUMZ 25025</strain>
        <tissue>Kidney</tissue>
        <tissue>Liver</tissue>
    </source>
</reference>
<evidence type="ECO:0000250" key="1"/>
<evidence type="ECO:0000250" key="2">
    <source>
        <dbReference type="UniProtKB" id="P00157"/>
    </source>
</evidence>
<evidence type="ECO:0000255" key="3">
    <source>
        <dbReference type="PROSITE-ProRule" id="PRU00968"/>
    </source>
</evidence>
<geneLocation type="mitochondrion"/>
<gene>
    <name type="primary">MT-CYB</name>
    <name type="synonym">COB</name>
    <name type="synonym">CYTB</name>
    <name type="synonym">MTCYB</name>
</gene>
<protein>
    <recommendedName>
        <fullName>Cytochrome b</fullName>
    </recommendedName>
    <alternativeName>
        <fullName>Complex III subunit 3</fullName>
    </alternativeName>
    <alternativeName>
        <fullName>Complex III subunit III</fullName>
    </alternativeName>
    <alternativeName>
        <fullName>Cytochrome b-c1 complex subunit 3</fullName>
    </alternativeName>
    <alternativeName>
        <fullName>Ubiquinol-cytochrome-c reductase complex cytochrome b subunit</fullName>
    </alternativeName>
</protein>
<sequence>MTNIRKSHPLIKIVNDAFIDLPAPSNISSWWNFGSLLGVCLIVQILTGLFLAMHYTSDTATAFNSVTHICRDVNYGWLLRYLHANGASMFFICLYLHIGRGLYYGSYTYTETWNVGVILLFAVMATAFMGYVLPWGQMSFWGATVITNLLSAIPYIGTELVQWIWGGLSVDKATLT</sequence>